<reference key="1">
    <citation type="journal article" date="2000" name="Nucleic Acids Res.">
        <title>Complete genome sequence of the alkaliphilic bacterium Bacillus halodurans and genomic sequence comparison with Bacillus subtilis.</title>
        <authorList>
            <person name="Takami H."/>
            <person name="Nakasone K."/>
            <person name="Takaki Y."/>
            <person name="Maeno G."/>
            <person name="Sasaki R."/>
            <person name="Masui N."/>
            <person name="Fuji F."/>
            <person name="Hirama C."/>
            <person name="Nakamura Y."/>
            <person name="Ogasawara N."/>
            <person name="Kuhara S."/>
            <person name="Horikoshi K."/>
        </authorList>
    </citation>
    <scope>NUCLEOTIDE SEQUENCE [LARGE SCALE GENOMIC DNA]</scope>
    <source>
        <strain>ATCC BAA-125 / DSM 18197 / FERM 7344 / JCM 9153 / C-125</strain>
    </source>
</reference>
<sequence length="295" mass="33715">MNVKEEIDIVIITGMSGAGKTVAVQSLEDLGYFCVDNLPPALIPKFIELIESSSGKMNKLALVIDLRGQTFFDQLFESIDLLDQSSLSKYNIQILFLDAKDAKLVQRYKETRRSHPLAKHGLPLDGIKKERELLEDLKGRAQQIIDTTDLKPIQLREKIIQRFSCEEHHSFTVNMMSFGFKYGIPIDADLVFDVRFLPNPHYVDHLRPKTGLEGEVSSYVLKWTETQQFIEKLEDLLSFMLPQYKREGKSQVVIGIGCTGGKHRSVTLAEHFAKVFANEYMMHVSHRDVEKGKER</sequence>
<dbReference type="EMBL" id="BA000004">
    <property type="protein sequence ID" value="BAB07288.1"/>
    <property type="molecule type" value="Genomic_DNA"/>
</dbReference>
<dbReference type="PIR" id="A84096">
    <property type="entry name" value="A84096"/>
</dbReference>
<dbReference type="RefSeq" id="WP_010899697.1">
    <property type="nucleotide sequence ID" value="NC_002570.2"/>
</dbReference>
<dbReference type="SMR" id="Q9K705"/>
<dbReference type="STRING" id="272558.gene:10729482"/>
<dbReference type="KEGG" id="bha:BH3569"/>
<dbReference type="eggNOG" id="COG1660">
    <property type="taxonomic scope" value="Bacteria"/>
</dbReference>
<dbReference type="HOGENOM" id="CLU_059558_0_0_9"/>
<dbReference type="OrthoDB" id="9784461at2"/>
<dbReference type="Proteomes" id="UP000001258">
    <property type="component" value="Chromosome"/>
</dbReference>
<dbReference type="GO" id="GO:0005524">
    <property type="term" value="F:ATP binding"/>
    <property type="evidence" value="ECO:0007669"/>
    <property type="project" value="UniProtKB-UniRule"/>
</dbReference>
<dbReference type="GO" id="GO:0005525">
    <property type="term" value="F:GTP binding"/>
    <property type="evidence" value="ECO:0007669"/>
    <property type="project" value="UniProtKB-UniRule"/>
</dbReference>
<dbReference type="Gene3D" id="3.40.50.300">
    <property type="entry name" value="P-loop containing nucleotide triphosphate hydrolases"/>
    <property type="match status" value="1"/>
</dbReference>
<dbReference type="HAMAP" id="MF_00636">
    <property type="entry name" value="RapZ_like"/>
    <property type="match status" value="1"/>
</dbReference>
<dbReference type="InterPro" id="IPR027417">
    <property type="entry name" value="P-loop_NTPase"/>
</dbReference>
<dbReference type="InterPro" id="IPR005337">
    <property type="entry name" value="RapZ-like"/>
</dbReference>
<dbReference type="InterPro" id="IPR053930">
    <property type="entry name" value="RapZ-like_N"/>
</dbReference>
<dbReference type="InterPro" id="IPR053931">
    <property type="entry name" value="RapZ_C"/>
</dbReference>
<dbReference type="NCBIfam" id="NF003828">
    <property type="entry name" value="PRK05416.1"/>
    <property type="match status" value="1"/>
</dbReference>
<dbReference type="PANTHER" id="PTHR30448">
    <property type="entry name" value="RNASE ADAPTER PROTEIN RAPZ"/>
    <property type="match status" value="1"/>
</dbReference>
<dbReference type="PANTHER" id="PTHR30448:SF0">
    <property type="entry name" value="RNASE ADAPTER PROTEIN RAPZ"/>
    <property type="match status" value="1"/>
</dbReference>
<dbReference type="Pfam" id="PF22740">
    <property type="entry name" value="PapZ_C"/>
    <property type="match status" value="1"/>
</dbReference>
<dbReference type="Pfam" id="PF03668">
    <property type="entry name" value="RapZ-like_N"/>
    <property type="match status" value="1"/>
</dbReference>
<dbReference type="PIRSF" id="PIRSF005052">
    <property type="entry name" value="P-loopkin"/>
    <property type="match status" value="1"/>
</dbReference>
<dbReference type="SUPFAM" id="SSF52540">
    <property type="entry name" value="P-loop containing nucleoside triphosphate hydrolases"/>
    <property type="match status" value="1"/>
</dbReference>
<comment type="function">
    <text evidence="1">Displays ATPase and GTPase activities.</text>
</comment>
<comment type="similarity">
    <text evidence="1">Belongs to the RapZ-like family.</text>
</comment>
<evidence type="ECO:0000255" key="1">
    <source>
        <dbReference type="HAMAP-Rule" id="MF_00636"/>
    </source>
</evidence>
<feature type="chain" id="PRO_0000107685" description="Nucleotide-binding protein BH3569">
    <location>
        <begin position="1"/>
        <end position="295"/>
    </location>
</feature>
<feature type="binding site" evidence="1">
    <location>
        <begin position="14"/>
        <end position="21"/>
    </location>
    <ligand>
        <name>ATP</name>
        <dbReference type="ChEBI" id="CHEBI:30616"/>
    </ligand>
</feature>
<feature type="binding site" evidence="1">
    <location>
        <begin position="65"/>
        <end position="68"/>
    </location>
    <ligand>
        <name>GTP</name>
        <dbReference type="ChEBI" id="CHEBI:37565"/>
    </ligand>
</feature>
<accession>Q9K705</accession>
<organism>
    <name type="scientific">Halalkalibacterium halodurans (strain ATCC BAA-125 / DSM 18197 / FERM 7344 / JCM 9153 / C-125)</name>
    <name type="common">Bacillus halodurans</name>
    <dbReference type="NCBI Taxonomy" id="272558"/>
    <lineage>
        <taxon>Bacteria</taxon>
        <taxon>Bacillati</taxon>
        <taxon>Bacillota</taxon>
        <taxon>Bacilli</taxon>
        <taxon>Bacillales</taxon>
        <taxon>Bacillaceae</taxon>
        <taxon>Halalkalibacterium (ex Joshi et al. 2022)</taxon>
    </lineage>
</organism>
<protein>
    <recommendedName>
        <fullName evidence="1">Nucleotide-binding protein BH3569</fullName>
    </recommendedName>
</protein>
<gene>
    <name type="ordered locus">BH3569</name>
</gene>
<keyword id="KW-0067">ATP-binding</keyword>
<keyword id="KW-0342">GTP-binding</keyword>
<keyword id="KW-0547">Nucleotide-binding</keyword>
<keyword id="KW-1185">Reference proteome</keyword>
<name>Y3569_HALH5</name>
<proteinExistence type="inferred from homology"/>